<reference key="1">
    <citation type="journal article" date="2004" name="Virology">
        <title>Comparative genomic analyses of frog virus 3, type species of the genus Ranavirus (family Iridoviridae).</title>
        <authorList>
            <person name="Tan W.G."/>
            <person name="Barkman T.J."/>
            <person name="Gregory Chinchar V."/>
            <person name="Essani K."/>
        </authorList>
    </citation>
    <scope>NUCLEOTIDE SEQUENCE [LARGE SCALE GENOMIC DNA]</scope>
</reference>
<accession>Q6GZP5</accession>
<evidence type="ECO:0000250" key="1"/>
<evidence type="ECO:0000255" key="2">
    <source>
        <dbReference type="PROSITE-ProRule" id="PRU00177"/>
    </source>
</evidence>
<evidence type="ECO:0000305" key="3"/>
<organism>
    <name type="scientific">Frog virus 3 (isolate Goorha)</name>
    <name type="common">FV-3</name>
    <dbReference type="NCBI Taxonomy" id="654924"/>
    <lineage>
        <taxon>Viruses</taxon>
        <taxon>Varidnaviria</taxon>
        <taxon>Bamfordvirae</taxon>
        <taxon>Nucleocytoviricota</taxon>
        <taxon>Megaviricetes</taxon>
        <taxon>Pimascovirales</taxon>
        <taxon>Iridoviridae</taxon>
        <taxon>Alphairidovirinae</taxon>
        <taxon>Ranavirus</taxon>
        <taxon>Frog virus 3</taxon>
    </lineage>
</organism>
<proteinExistence type="inferred from homology"/>
<dbReference type="EC" id="3.1.26.3"/>
<dbReference type="EMBL" id="AY548484">
    <property type="protein sequence ID" value="AAT09740.1"/>
    <property type="molecule type" value="Genomic_DNA"/>
</dbReference>
<dbReference type="RefSeq" id="YP_031659.1">
    <property type="nucleotide sequence ID" value="NC_005946.1"/>
</dbReference>
<dbReference type="SMR" id="Q6GZP5"/>
<dbReference type="KEGG" id="vg:2947799"/>
<dbReference type="Proteomes" id="UP000008770">
    <property type="component" value="Segment"/>
</dbReference>
<dbReference type="GO" id="GO:0004525">
    <property type="term" value="F:ribonuclease III activity"/>
    <property type="evidence" value="ECO:0007669"/>
    <property type="project" value="UniProtKB-EC"/>
</dbReference>
<dbReference type="GO" id="GO:0003723">
    <property type="term" value="F:RNA binding"/>
    <property type="evidence" value="ECO:0007669"/>
    <property type="project" value="UniProtKB-KW"/>
</dbReference>
<dbReference type="GO" id="GO:0006396">
    <property type="term" value="P:RNA processing"/>
    <property type="evidence" value="ECO:0007669"/>
    <property type="project" value="InterPro"/>
</dbReference>
<dbReference type="CDD" id="cd00593">
    <property type="entry name" value="RIBOc"/>
    <property type="match status" value="1"/>
</dbReference>
<dbReference type="Gene3D" id="1.10.1520.10">
    <property type="entry name" value="Ribonuclease III domain"/>
    <property type="match status" value="1"/>
</dbReference>
<dbReference type="InterPro" id="IPR000999">
    <property type="entry name" value="RNase_III_dom"/>
</dbReference>
<dbReference type="InterPro" id="IPR036389">
    <property type="entry name" value="RNase_III_sf"/>
</dbReference>
<dbReference type="Pfam" id="PF00636">
    <property type="entry name" value="Ribonuclease_3"/>
    <property type="match status" value="1"/>
</dbReference>
<dbReference type="SMART" id="SM00535">
    <property type="entry name" value="RIBOc"/>
    <property type="match status" value="1"/>
</dbReference>
<dbReference type="SUPFAM" id="SSF69065">
    <property type="entry name" value="RNase III domain-like"/>
    <property type="match status" value="1"/>
</dbReference>
<dbReference type="PROSITE" id="PS50142">
    <property type="entry name" value="RNASE_3_2"/>
    <property type="match status" value="1"/>
</dbReference>
<gene>
    <name type="ORF">FV3-080L</name>
</gene>
<sequence length="371" mass="40362">MEGWLGNLLAKSVKDKYIPVIVGRRDLWNKVFTPKSVNPDDNYEALEIVGDGVASYFFPSYFLKRFPQLNSPKGVKTVARLKIYYGSKKSFSSIADSLGFWKFIRSGPVPVNPSTRESLLEDTFEAFLGAVCMAVDDEYSIDGLGAVVAYKIMADIFDDMDISLEYTALFDTVTRLKELMDVKKDVLGGDAVYNHRGDTTVITLKGRVIGKATGAIKRDRAKEAAGQALDLLRREGHFREHDDDAVVKVAKGPAGDGLVVAQSALGGFTVFGAESGVVEGSGGTVAQALSRVVGTKRPSAVEVAGGDYKSLLKEYLESVGETDSVNYIHEGVTVTMTRKGKPVATANHLVKKVREQLASRDYYRTVHAKGV</sequence>
<feature type="chain" id="PRO_0000410590" description="Putative ribonuclease 3">
    <location>
        <begin position="1"/>
        <end position="371"/>
    </location>
</feature>
<feature type="domain" description="RNase III" evidence="2">
    <location>
        <begin position="10"/>
        <end position="136"/>
    </location>
</feature>
<name>RNC_FRG3G</name>
<protein>
    <recommendedName>
        <fullName>Putative ribonuclease 3</fullName>
        <ecNumber>3.1.26.3</ecNumber>
    </recommendedName>
    <alternativeName>
        <fullName>Ribonuclease III</fullName>
        <shortName>RNase III</shortName>
    </alternativeName>
</protein>
<keyword id="KW-0255">Endonuclease</keyword>
<keyword id="KW-0378">Hydrolase</keyword>
<keyword id="KW-0540">Nuclease</keyword>
<keyword id="KW-1185">Reference proteome</keyword>
<keyword id="KW-0694">RNA-binding</keyword>
<organismHost>
    <name type="scientific">Dryophytes versicolor</name>
    <name type="common">chameleon treefrog</name>
    <dbReference type="NCBI Taxonomy" id="30343"/>
</organismHost>
<organismHost>
    <name type="scientific">Lithobates pipiens</name>
    <name type="common">Northern leopard frog</name>
    <name type="synonym">Rana pipiens</name>
    <dbReference type="NCBI Taxonomy" id="8404"/>
</organismHost>
<organismHost>
    <name type="scientific">Lithobates sylvaticus</name>
    <name type="common">Wood frog</name>
    <name type="synonym">Rana sylvatica</name>
    <dbReference type="NCBI Taxonomy" id="45438"/>
</organismHost>
<organismHost>
    <name type="scientific">Notophthalmus viridescens</name>
    <name type="common">Eastern newt</name>
    <name type="synonym">Triturus viridescens</name>
    <dbReference type="NCBI Taxonomy" id="8316"/>
</organismHost>
<comment type="function">
    <text evidence="1">Digests double-stranded RNA.</text>
</comment>
<comment type="catalytic activity">
    <reaction>
        <text>Endonucleolytic cleavage to 5'-phosphomonoester.</text>
        <dbReference type="EC" id="3.1.26.3"/>
    </reaction>
</comment>
<comment type="similarity">
    <text evidence="3">Belongs to the IIV-6 142R family.</text>
</comment>